<dbReference type="EMBL" id="M92076">
    <property type="status" value="NOT_ANNOTATED_CDS"/>
    <property type="molecule type" value="mRNA"/>
</dbReference>
<dbReference type="PIR" id="JH0562">
    <property type="entry name" value="JH0562"/>
</dbReference>
<dbReference type="RefSeq" id="NP_001099182.1">
    <property type="nucleotide sequence ID" value="NM_001105712.1"/>
</dbReference>
<dbReference type="RefSeq" id="XP_038962943.1">
    <property type="nucleotide sequence ID" value="XM_039107015.2"/>
</dbReference>
<dbReference type="RefSeq" id="XP_063141591.1">
    <property type="nucleotide sequence ID" value="XM_063285521.1"/>
</dbReference>
<dbReference type="PDB" id="2E4U">
    <property type="method" value="X-ray"/>
    <property type="resolution" value="2.35 A"/>
    <property type="chains" value="A/B=25-575"/>
</dbReference>
<dbReference type="PDB" id="2E4V">
    <property type="method" value="X-ray"/>
    <property type="resolution" value="2.40 A"/>
    <property type="chains" value="A/B=25-575"/>
</dbReference>
<dbReference type="PDB" id="2E4W">
    <property type="method" value="X-ray"/>
    <property type="resolution" value="2.40 A"/>
    <property type="chains" value="A/B=25-575"/>
</dbReference>
<dbReference type="PDB" id="2E4X">
    <property type="method" value="X-ray"/>
    <property type="resolution" value="2.75 A"/>
    <property type="chains" value="A/B=25-575"/>
</dbReference>
<dbReference type="PDB" id="2E4Y">
    <property type="method" value="X-ray"/>
    <property type="resolution" value="3.40 A"/>
    <property type="chains" value="A/B=25-575"/>
</dbReference>
<dbReference type="PDB" id="8TQB">
    <property type="method" value="EM"/>
    <property type="resolution" value="3.30 A"/>
    <property type="chains" value="A/B=1-879"/>
</dbReference>
<dbReference type="PDB" id="8TR0">
    <property type="method" value="EM"/>
    <property type="resolution" value="3.20 A"/>
    <property type="chains" value="A/B=1-879"/>
</dbReference>
<dbReference type="PDB" id="8TR2">
    <property type="method" value="EM"/>
    <property type="resolution" value="3.50 A"/>
    <property type="chains" value="A/B=1-879"/>
</dbReference>
<dbReference type="PDB" id="8TRC">
    <property type="method" value="EM"/>
    <property type="resolution" value="3.30 A"/>
    <property type="chains" value="A/B=1-879"/>
</dbReference>
<dbReference type="PDB" id="8TRD">
    <property type="method" value="EM"/>
    <property type="resolution" value="3.40 A"/>
    <property type="chains" value="A/B=1-879"/>
</dbReference>
<dbReference type="PDBsum" id="2E4U"/>
<dbReference type="PDBsum" id="2E4V"/>
<dbReference type="PDBsum" id="2E4W"/>
<dbReference type="PDBsum" id="2E4X"/>
<dbReference type="PDBsum" id="2E4Y"/>
<dbReference type="PDBsum" id="8TQB"/>
<dbReference type="PDBsum" id="8TR0"/>
<dbReference type="PDBsum" id="8TR2"/>
<dbReference type="PDBsum" id="8TRC"/>
<dbReference type="PDBsum" id="8TRD"/>
<dbReference type="EMDB" id="EMD-41501"/>
<dbReference type="EMDB" id="EMD-41567"/>
<dbReference type="EMDB" id="EMD-41568"/>
<dbReference type="EMDB" id="EMD-41577"/>
<dbReference type="EMDB" id="EMD-41578"/>
<dbReference type="SMR" id="P31422"/>
<dbReference type="BioGRID" id="246581">
    <property type="interactions" value="2"/>
</dbReference>
<dbReference type="DIP" id="DIP-41143N"/>
<dbReference type="FunCoup" id="P31422">
    <property type="interactions" value="1323"/>
</dbReference>
<dbReference type="IntAct" id="P31422">
    <property type="interactions" value="4"/>
</dbReference>
<dbReference type="MINT" id="P31422"/>
<dbReference type="STRING" id="10116.ENSRNOP00000069396"/>
<dbReference type="BindingDB" id="P31422"/>
<dbReference type="ChEMBL" id="CHEMBL3067"/>
<dbReference type="DrugCentral" id="P31422"/>
<dbReference type="GuidetoPHARMACOLOGY" id="291"/>
<dbReference type="GlyCosmos" id="P31422">
    <property type="glycosylation" value="4 sites, 9 glycans"/>
</dbReference>
<dbReference type="GlyGen" id="P31422">
    <property type="glycosylation" value="4 sites, 9 N-linked glycans (2 sites)"/>
</dbReference>
<dbReference type="iPTMnet" id="P31422"/>
<dbReference type="PhosphoSitePlus" id="P31422"/>
<dbReference type="PaxDb" id="10116-ENSRNOP00000007572"/>
<dbReference type="Ensembl" id="ENSRNOT00000007572.8">
    <property type="protein sequence ID" value="ENSRNOP00000007572.6"/>
    <property type="gene ID" value="ENSRNOG00000005519.8"/>
</dbReference>
<dbReference type="GeneID" id="24416"/>
<dbReference type="KEGG" id="rno:24416"/>
<dbReference type="AGR" id="RGD:2744"/>
<dbReference type="CTD" id="2913"/>
<dbReference type="RGD" id="2744">
    <property type="gene designation" value="Grm3"/>
</dbReference>
<dbReference type="eggNOG" id="KOG1056">
    <property type="taxonomic scope" value="Eukaryota"/>
</dbReference>
<dbReference type="GeneTree" id="ENSGT01030000234595"/>
<dbReference type="HOGENOM" id="CLU_005389_0_0_1"/>
<dbReference type="InParanoid" id="P31422"/>
<dbReference type="OrthoDB" id="425344at2759"/>
<dbReference type="PhylomeDB" id="P31422"/>
<dbReference type="Reactome" id="R-RNO-418594">
    <property type="pathway name" value="G alpha (i) signalling events"/>
</dbReference>
<dbReference type="Reactome" id="R-RNO-420499">
    <property type="pathway name" value="Class C/3 (Metabotropic glutamate/pheromone receptors)"/>
</dbReference>
<dbReference type="EvolutionaryTrace" id="P31422"/>
<dbReference type="PRO" id="PR:P31422"/>
<dbReference type="Proteomes" id="UP000002494">
    <property type="component" value="Chromosome 4"/>
</dbReference>
<dbReference type="Bgee" id="ENSRNOG00000005519">
    <property type="expression patterns" value="Expressed in Ammon's horn and 4 other cell types or tissues"/>
</dbReference>
<dbReference type="ExpressionAtlas" id="P31422">
    <property type="expression patterns" value="baseline and differential"/>
</dbReference>
<dbReference type="GO" id="GO:0097449">
    <property type="term" value="C:astrocyte projection"/>
    <property type="evidence" value="ECO:0000314"/>
    <property type="project" value="ARUK-UCL"/>
</dbReference>
<dbReference type="GO" id="GO:0030424">
    <property type="term" value="C:axon"/>
    <property type="evidence" value="ECO:0000314"/>
    <property type="project" value="ARUK-UCL"/>
</dbReference>
<dbReference type="GO" id="GO:0043197">
    <property type="term" value="C:dendritic spine"/>
    <property type="evidence" value="ECO:0000266"/>
    <property type="project" value="RGD"/>
</dbReference>
<dbReference type="GO" id="GO:0098978">
    <property type="term" value="C:glutamatergic synapse"/>
    <property type="evidence" value="ECO:0000266"/>
    <property type="project" value="RGD"/>
</dbReference>
<dbReference type="GO" id="GO:0043005">
    <property type="term" value="C:neuron projection"/>
    <property type="evidence" value="ECO:0000266"/>
    <property type="project" value="RGD"/>
</dbReference>
<dbReference type="GO" id="GO:0005886">
    <property type="term" value="C:plasma membrane"/>
    <property type="evidence" value="ECO:0000266"/>
    <property type="project" value="RGD"/>
</dbReference>
<dbReference type="GO" id="GO:0014069">
    <property type="term" value="C:postsynaptic density"/>
    <property type="evidence" value="ECO:0000266"/>
    <property type="project" value="RGD"/>
</dbReference>
<dbReference type="GO" id="GO:0045211">
    <property type="term" value="C:postsynaptic membrane"/>
    <property type="evidence" value="ECO:0000266"/>
    <property type="project" value="RGD"/>
</dbReference>
<dbReference type="GO" id="GO:0042734">
    <property type="term" value="C:presynaptic membrane"/>
    <property type="evidence" value="ECO:0000266"/>
    <property type="project" value="RGD"/>
</dbReference>
<dbReference type="GO" id="GO:0005246">
    <property type="term" value="F:calcium channel regulator activity"/>
    <property type="evidence" value="ECO:0000266"/>
    <property type="project" value="RGD"/>
</dbReference>
<dbReference type="GO" id="GO:0001641">
    <property type="term" value="F:group II metabotropic glutamate receptor activity"/>
    <property type="evidence" value="ECO:0000315"/>
    <property type="project" value="RGD"/>
</dbReference>
<dbReference type="GO" id="GO:0097110">
    <property type="term" value="F:scaffold protein binding"/>
    <property type="evidence" value="ECO:0000353"/>
    <property type="project" value="ARUK-UCL"/>
</dbReference>
<dbReference type="GO" id="GO:0033554">
    <property type="term" value="P:cellular response to stress"/>
    <property type="evidence" value="ECO:0000266"/>
    <property type="project" value="RGD"/>
</dbReference>
<dbReference type="GO" id="GO:0007216">
    <property type="term" value="P:G protein-coupled glutamate receptor signaling pathway"/>
    <property type="evidence" value="ECO:0000318"/>
    <property type="project" value="GO_Central"/>
</dbReference>
<dbReference type="GO" id="GO:0010467">
    <property type="term" value="P:gene expression"/>
    <property type="evidence" value="ECO:0000266"/>
    <property type="project" value="RGD"/>
</dbReference>
<dbReference type="GO" id="GO:0050804">
    <property type="term" value="P:modulation of chemical synaptic transmission"/>
    <property type="evidence" value="ECO:0000314"/>
    <property type="project" value="RGD"/>
</dbReference>
<dbReference type="GO" id="GO:0099170">
    <property type="term" value="P:postsynaptic modulation of chemical synaptic transmission"/>
    <property type="evidence" value="ECO:0000266"/>
    <property type="project" value="RGD"/>
</dbReference>
<dbReference type="GO" id="GO:0051966">
    <property type="term" value="P:regulation of synaptic transmission, glutamatergic"/>
    <property type="evidence" value="ECO:0000318"/>
    <property type="project" value="GO_Central"/>
</dbReference>
<dbReference type="GO" id="GO:0019233">
    <property type="term" value="P:sensory perception of pain"/>
    <property type="evidence" value="ECO:0000304"/>
    <property type="project" value="UniProtKB"/>
</dbReference>
<dbReference type="CDD" id="cd15448">
    <property type="entry name" value="7tmC_mGluR3"/>
    <property type="match status" value="1"/>
</dbReference>
<dbReference type="CDD" id="cd06375">
    <property type="entry name" value="PBP1_mGluR_groupII"/>
    <property type="match status" value="1"/>
</dbReference>
<dbReference type="FunFam" id="2.10.50.30:FF:000001">
    <property type="entry name" value="metabotropic glutamate receptor 1"/>
    <property type="match status" value="1"/>
</dbReference>
<dbReference type="FunFam" id="3.40.50.2300:FF:000029">
    <property type="entry name" value="Metabotropic glutamate receptor 3"/>
    <property type="match status" value="1"/>
</dbReference>
<dbReference type="Gene3D" id="3.40.50.2300">
    <property type="match status" value="2"/>
</dbReference>
<dbReference type="Gene3D" id="2.10.50.30">
    <property type="entry name" value="GPCR, family 3, nine cysteines domain"/>
    <property type="match status" value="1"/>
</dbReference>
<dbReference type="InterPro" id="IPR001828">
    <property type="entry name" value="ANF_lig-bd_rcpt"/>
</dbReference>
<dbReference type="InterPro" id="IPR000337">
    <property type="entry name" value="GPCR_3"/>
</dbReference>
<dbReference type="InterPro" id="IPR011500">
    <property type="entry name" value="GPCR_3_9-Cys_dom"/>
</dbReference>
<dbReference type="InterPro" id="IPR038550">
    <property type="entry name" value="GPCR_3_9-Cys_sf"/>
</dbReference>
<dbReference type="InterPro" id="IPR017978">
    <property type="entry name" value="GPCR_3_C"/>
</dbReference>
<dbReference type="InterPro" id="IPR017979">
    <property type="entry name" value="GPCR_3_CS"/>
</dbReference>
<dbReference type="InterPro" id="IPR001234">
    <property type="entry name" value="GPCR_3_mGluR3"/>
</dbReference>
<dbReference type="InterPro" id="IPR000162">
    <property type="entry name" value="GPCR_3_mtglu_rcpt"/>
</dbReference>
<dbReference type="InterPro" id="IPR050726">
    <property type="entry name" value="mGluR"/>
</dbReference>
<dbReference type="InterPro" id="IPR028082">
    <property type="entry name" value="Peripla_BP_I"/>
</dbReference>
<dbReference type="PANTHER" id="PTHR24060">
    <property type="entry name" value="METABOTROPIC GLUTAMATE RECEPTOR"/>
    <property type="match status" value="1"/>
</dbReference>
<dbReference type="Pfam" id="PF00003">
    <property type="entry name" value="7tm_3"/>
    <property type="match status" value="1"/>
</dbReference>
<dbReference type="Pfam" id="PF01094">
    <property type="entry name" value="ANF_receptor"/>
    <property type="match status" value="1"/>
</dbReference>
<dbReference type="Pfam" id="PF07562">
    <property type="entry name" value="NCD3G"/>
    <property type="match status" value="1"/>
</dbReference>
<dbReference type="PRINTS" id="PR00248">
    <property type="entry name" value="GPCRMGR"/>
</dbReference>
<dbReference type="PRINTS" id="PR01053">
    <property type="entry name" value="MTABOTROPC3R"/>
</dbReference>
<dbReference type="PRINTS" id="PR00593">
    <property type="entry name" value="MTABOTROPICR"/>
</dbReference>
<dbReference type="SUPFAM" id="SSF53822">
    <property type="entry name" value="Periplasmic binding protein-like I"/>
    <property type="match status" value="1"/>
</dbReference>
<dbReference type="PROSITE" id="PS00979">
    <property type="entry name" value="G_PROTEIN_RECEP_F3_1"/>
    <property type="match status" value="1"/>
</dbReference>
<dbReference type="PROSITE" id="PS00980">
    <property type="entry name" value="G_PROTEIN_RECEP_F3_2"/>
    <property type="match status" value="1"/>
</dbReference>
<dbReference type="PROSITE" id="PS00981">
    <property type="entry name" value="G_PROTEIN_RECEP_F3_3"/>
    <property type="match status" value="1"/>
</dbReference>
<dbReference type="PROSITE" id="PS50259">
    <property type="entry name" value="G_PROTEIN_RECEP_F3_4"/>
    <property type="match status" value="1"/>
</dbReference>
<gene>
    <name type="primary">Grm3</name>
    <name type="synonym">Gprc1c</name>
    <name type="synonym">Mglur3</name>
</gene>
<accession>P31422</accession>
<reference key="1">
    <citation type="journal article" date="1992" name="Neuron">
        <title>A family of metabotropic glutamate receptors.</title>
        <authorList>
            <person name="Tanabe Y."/>
            <person name="Masu M."/>
            <person name="Ishii T."/>
            <person name="Shigemoto R."/>
            <person name="Nakanishi S."/>
        </authorList>
    </citation>
    <scope>NUCLEOTIDE SEQUENCE [MRNA]</scope>
    <source>
        <tissue>Brain</tissue>
    </source>
</reference>
<reference key="2">
    <citation type="journal article" date="2002" name="J. Neurosci.">
        <title>Tamalin, a PDZ domain-containing protein, links a protein complex formation of group 1 metabotropic glutamate receptors and the guanine nucleotide exchange factor cytohesins.</title>
        <authorList>
            <person name="Kitano J."/>
            <person name="Kimura K."/>
            <person name="Yamazaki Y."/>
            <person name="Soda T."/>
            <person name="Shigemoto R."/>
            <person name="Nakajima Y."/>
            <person name="Nakanishi S."/>
        </authorList>
    </citation>
    <scope>INTERACTION WITH TAMALIN</scope>
</reference>
<reference key="3">
    <citation type="journal article" date="2013" name="J. Proteome Res.">
        <title>Site-specific glycan-peptide analysis for determination of N-glycoproteome heterogeneity.</title>
        <authorList>
            <person name="Parker B.L."/>
            <person name="Thaysen-Andersen M."/>
            <person name="Solis N."/>
            <person name="Scott N.E."/>
            <person name="Larsen M.R."/>
            <person name="Graham M.E."/>
            <person name="Packer N.H."/>
            <person name="Cordwell S.J."/>
        </authorList>
    </citation>
    <scope>GLYCOSYLATION [LARGE SCALE ANALYSIS] AT ASN-439</scope>
    <scope>IDENTIFICATION BY MASS SPECTROMETRY [LARGE SCALE ANALYSIS]</scope>
    <source>
        <tissue>Brain</tissue>
    </source>
</reference>
<reference key="4">
    <citation type="journal article" date="2007" name="Proc. Natl. Acad. Sci. U.S.A.">
        <title>Structures of the extracellular regions of the group II/III metabotropic glutamate receptors.</title>
        <authorList>
            <person name="Muto T."/>
            <person name="Tsuchiya D."/>
            <person name="Morikawa K."/>
            <person name="Jingami H."/>
        </authorList>
    </citation>
    <scope>X-RAY CRYSTALLOGRAPHY (2.35 ANGSTROMS) OF 25-575 IN COMPLEXES WITH GLUTAMATE</scope>
    <scope>GLYCOSYLATION AT ASN-209</scope>
    <scope>DISULFIDE BONDS</scope>
</reference>
<organism>
    <name type="scientific">Rattus norvegicus</name>
    <name type="common">Rat</name>
    <dbReference type="NCBI Taxonomy" id="10116"/>
    <lineage>
        <taxon>Eukaryota</taxon>
        <taxon>Metazoa</taxon>
        <taxon>Chordata</taxon>
        <taxon>Craniata</taxon>
        <taxon>Vertebrata</taxon>
        <taxon>Euteleostomi</taxon>
        <taxon>Mammalia</taxon>
        <taxon>Eutheria</taxon>
        <taxon>Euarchontoglires</taxon>
        <taxon>Glires</taxon>
        <taxon>Rodentia</taxon>
        <taxon>Myomorpha</taxon>
        <taxon>Muroidea</taxon>
        <taxon>Muridae</taxon>
        <taxon>Murinae</taxon>
        <taxon>Rattus</taxon>
    </lineage>
</organism>
<feature type="signal peptide" evidence="1">
    <location>
        <begin position="1"/>
        <end position="22"/>
    </location>
</feature>
<feature type="chain" id="PRO_0000012929" description="Metabotropic glutamate receptor 3">
    <location>
        <begin position="23"/>
        <end position="879"/>
    </location>
</feature>
<feature type="topological domain" description="Extracellular" evidence="1">
    <location>
        <begin position="23"/>
        <end position="576"/>
    </location>
</feature>
<feature type="transmembrane region" description="Helical; Name=1" evidence="1">
    <location>
        <begin position="577"/>
        <end position="599"/>
    </location>
</feature>
<feature type="topological domain" description="Cytoplasmic" evidence="1">
    <location>
        <begin position="600"/>
        <end position="613"/>
    </location>
</feature>
<feature type="transmembrane region" description="Helical; Name=2" evidence="1">
    <location>
        <begin position="614"/>
        <end position="634"/>
    </location>
</feature>
<feature type="topological domain" description="Extracellular" evidence="1">
    <location>
        <begin position="635"/>
        <end position="645"/>
    </location>
</feature>
<feature type="transmembrane region" description="Helical; Name=3" evidence="1">
    <location>
        <begin position="646"/>
        <end position="664"/>
    </location>
</feature>
<feature type="topological domain" description="Cytoplasmic" evidence="1">
    <location>
        <begin position="665"/>
        <end position="688"/>
    </location>
</feature>
<feature type="transmembrane region" description="Helical; Name=4" evidence="1">
    <location>
        <begin position="689"/>
        <end position="709"/>
    </location>
</feature>
<feature type="topological domain" description="Extracellular" evidence="1">
    <location>
        <begin position="710"/>
        <end position="734"/>
    </location>
</feature>
<feature type="transmembrane region" description="Helical; Name=5" evidence="1">
    <location>
        <begin position="735"/>
        <end position="756"/>
    </location>
</feature>
<feature type="topological domain" description="Cytoplasmic" evidence="1">
    <location>
        <begin position="757"/>
        <end position="769"/>
    </location>
</feature>
<feature type="transmembrane region" description="Helical; Name=6" evidence="1">
    <location>
        <begin position="770"/>
        <end position="792"/>
    </location>
</feature>
<feature type="topological domain" description="Extracellular" evidence="1">
    <location>
        <begin position="793"/>
        <end position="802"/>
    </location>
</feature>
<feature type="transmembrane region" description="Helical; Name=7" evidence="1">
    <location>
        <begin position="803"/>
        <end position="828"/>
    </location>
</feature>
<feature type="topological domain" description="Cytoplasmic" evidence="1">
    <location>
        <begin position="829"/>
        <end position="879"/>
    </location>
</feature>
<feature type="binding site">
    <location>
        <position position="68"/>
    </location>
    <ligand>
        <name>L-glutamate</name>
        <dbReference type="ChEBI" id="CHEBI:29985"/>
    </ligand>
</feature>
<feature type="binding site">
    <location>
        <position position="151"/>
    </location>
    <ligand>
        <name>L-glutamate</name>
        <dbReference type="ChEBI" id="CHEBI:29985"/>
    </ligand>
</feature>
<feature type="binding site">
    <location>
        <begin position="172"/>
        <end position="174"/>
    </location>
    <ligand>
        <name>L-glutamate</name>
        <dbReference type="ChEBI" id="CHEBI:29985"/>
    </ligand>
</feature>
<feature type="binding site">
    <location>
        <position position="222"/>
    </location>
    <ligand>
        <name>L-glutamate</name>
        <dbReference type="ChEBI" id="CHEBI:29985"/>
    </ligand>
</feature>
<feature type="binding site">
    <location>
        <position position="301"/>
    </location>
    <ligand>
        <name>L-glutamate</name>
        <dbReference type="ChEBI" id="CHEBI:29985"/>
    </ligand>
</feature>
<feature type="binding site">
    <location>
        <position position="389"/>
    </location>
    <ligand>
        <name>L-glutamate</name>
        <dbReference type="ChEBI" id="CHEBI:29985"/>
    </ligand>
</feature>
<feature type="glycosylation site" description="N-linked (GlcNAc...) asparagine" evidence="3">
    <location>
        <position position="209"/>
    </location>
</feature>
<feature type="glycosylation site" description="N-linked (GlcNAc...) asparagine" evidence="1">
    <location>
        <position position="292"/>
    </location>
</feature>
<feature type="glycosylation site" description="N-linked (GlcNAc...) asparagine" evidence="1">
    <location>
        <position position="414"/>
    </location>
</feature>
<feature type="glycosylation site" description="N-linked (GlcNAc...) asparagine" evidence="5">
    <location>
        <position position="439"/>
    </location>
</feature>
<feature type="disulfide bond" evidence="3">
    <location>
        <begin position="57"/>
        <end position="99"/>
    </location>
</feature>
<feature type="disulfide bond" evidence="3">
    <location>
        <begin position="240"/>
        <end position="527"/>
    </location>
</feature>
<feature type="disulfide bond" evidence="3">
    <location>
        <begin position="361"/>
        <end position="373"/>
    </location>
</feature>
<feature type="disulfide bond" evidence="3">
    <location>
        <begin position="412"/>
        <end position="419"/>
    </location>
</feature>
<feature type="disulfide bond" evidence="3">
    <location>
        <begin position="509"/>
        <end position="528"/>
    </location>
</feature>
<feature type="disulfide bond" evidence="3">
    <location>
        <begin position="513"/>
        <end position="531"/>
    </location>
</feature>
<feature type="disulfide bond" evidence="3">
    <location>
        <begin position="534"/>
        <end position="546"/>
    </location>
</feature>
<feature type="disulfide bond" evidence="3">
    <location>
        <begin position="549"/>
        <end position="562"/>
    </location>
</feature>
<feature type="strand" evidence="6">
    <location>
        <begin position="33"/>
        <end position="35"/>
    </location>
</feature>
<feature type="strand" evidence="6">
    <location>
        <begin position="38"/>
        <end position="45"/>
    </location>
</feature>
<feature type="strand" evidence="6">
    <location>
        <begin position="48"/>
        <end position="50"/>
    </location>
</feature>
<feature type="strand" evidence="12">
    <location>
        <begin position="52"/>
        <end position="55"/>
    </location>
</feature>
<feature type="strand" evidence="6">
    <location>
        <begin position="56"/>
        <end position="60"/>
    </location>
</feature>
<feature type="turn" evidence="6">
    <location>
        <begin position="62"/>
        <end position="65"/>
    </location>
</feature>
<feature type="helix" evidence="6">
    <location>
        <begin position="66"/>
        <end position="81"/>
    </location>
</feature>
<feature type="strand" evidence="8">
    <location>
        <begin position="83"/>
        <end position="86"/>
    </location>
</feature>
<feature type="strand" evidence="6">
    <location>
        <begin position="91"/>
        <end position="97"/>
    </location>
</feature>
<feature type="helix" evidence="6">
    <location>
        <begin position="102"/>
        <end position="114"/>
    </location>
</feature>
<feature type="strand" evidence="6">
    <location>
        <begin position="142"/>
        <end position="147"/>
    </location>
</feature>
<feature type="helix" evidence="6">
    <location>
        <begin position="151"/>
        <end position="161"/>
    </location>
</feature>
<feature type="helix" evidence="6">
    <location>
        <begin position="162"/>
        <end position="164"/>
    </location>
</feature>
<feature type="strand" evidence="6">
    <location>
        <begin position="168"/>
        <end position="172"/>
    </location>
</feature>
<feature type="helix" evidence="6">
    <location>
        <begin position="176"/>
        <end position="179"/>
    </location>
</feature>
<feature type="turn" evidence="6">
    <location>
        <begin position="181"/>
        <end position="183"/>
    </location>
</feature>
<feature type="strand" evidence="6">
    <location>
        <begin position="187"/>
        <end position="191"/>
    </location>
</feature>
<feature type="helix" evidence="6">
    <location>
        <begin position="194"/>
        <end position="207"/>
    </location>
</feature>
<feature type="strand" evidence="6">
    <location>
        <begin position="212"/>
        <end position="220"/>
    </location>
</feature>
<feature type="helix" evidence="6">
    <location>
        <begin position="223"/>
        <end position="235"/>
    </location>
</feature>
<feature type="turn" evidence="6">
    <location>
        <begin position="236"/>
        <end position="238"/>
    </location>
</feature>
<feature type="strand" evidence="6">
    <location>
        <begin position="240"/>
        <end position="247"/>
    </location>
</feature>
<feature type="strand" evidence="10">
    <location>
        <begin position="249"/>
        <end position="252"/>
    </location>
</feature>
<feature type="helix" evidence="6">
    <location>
        <begin position="253"/>
        <end position="264"/>
    </location>
</feature>
<feature type="strand" evidence="6">
    <location>
        <begin position="271"/>
        <end position="275"/>
    </location>
</feature>
<feature type="helix" evidence="6">
    <location>
        <begin position="278"/>
        <end position="290"/>
    </location>
</feature>
<feature type="strand" evidence="6">
    <location>
        <begin position="296"/>
        <end position="299"/>
    </location>
</feature>
<feature type="turn" evidence="6">
    <location>
        <begin position="301"/>
        <end position="305"/>
    </location>
</feature>
<feature type="helix" evidence="6">
    <location>
        <begin position="307"/>
        <end position="309"/>
    </location>
</feature>
<feature type="turn" evidence="6">
    <location>
        <begin position="310"/>
        <end position="312"/>
    </location>
</feature>
<feature type="helix" evidence="6">
    <location>
        <begin position="314"/>
        <end position="317"/>
    </location>
</feature>
<feature type="strand" evidence="6">
    <location>
        <begin position="321"/>
        <end position="325"/>
    </location>
</feature>
<feature type="helix" evidence="6">
    <location>
        <begin position="331"/>
        <end position="338"/>
    </location>
</feature>
<feature type="turn" evidence="6">
    <location>
        <begin position="342"/>
        <end position="344"/>
    </location>
</feature>
<feature type="helix" evidence="6">
    <location>
        <begin position="351"/>
        <end position="358"/>
    </location>
</feature>
<feature type="strand" evidence="12">
    <location>
        <begin position="360"/>
        <end position="362"/>
    </location>
</feature>
<feature type="strand" evidence="7">
    <location>
        <begin position="363"/>
        <end position="368"/>
    </location>
</feature>
<feature type="strand" evidence="10">
    <location>
        <begin position="370"/>
        <end position="372"/>
    </location>
</feature>
<feature type="turn" evidence="6">
    <location>
        <begin position="381"/>
        <end position="383"/>
    </location>
</feature>
<feature type="helix" evidence="6">
    <location>
        <begin position="390"/>
        <end position="411"/>
    </location>
</feature>
<feature type="helix" evidence="6">
    <location>
        <begin position="420"/>
        <end position="422"/>
    </location>
</feature>
<feature type="helix" evidence="6">
    <location>
        <begin position="427"/>
        <end position="434"/>
    </location>
</feature>
<feature type="helix" evidence="10">
    <location>
        <begin position="435"/>
        <end position="437"/>
    </location>
</feature>
<feature type="strand" evidence="6">
    <location>
        <begin position="438"/>
        <end position="440"/>
    </location>
</feature>
<feature type="strand" evidence="6">
    <location>
        <begin position="443"/>
        <end position="445"/>
    </location>
</feature>
<feature type="strand" evidence="6">
    <location>
        <begin position="448"/>
        <end position="450"/>
    </location>
</feature>
<feature type="strand" evidence="6">
    <location>
        <begin position="453"/>
        <end position="455"/>
    </location>
</feature>
<feature type="strand" evidence="8">
    <location>
        <begin position="458"/>
        <end position="460"/>
    </location>
</feature>
<feature type="strand" evidence="6">
    <location>
        <begin position="466"/>
        <end position="472"/>
    </location>
</feature>
<feature type="strand" evidence="8">
    <location>
        <begin position="474"/>
        <end position="477"/>
    </location>
</feature>
<feature type="strand" evidence="6">
    <location>
        <begin position="479"/>
        <end position="491"/>
    </location>
</feature>
<feature type="helix" evidence="6">
    <location>
        <begin position="494"/>
        <end position="496"/>
    </location>
</feature>
<feature type="helix" evidence="7">
    <location>
        <begin position="500"/>
        <end position="502"/>
    </location>
</feature>
<feature type="turn" evidence="6">
    <location>
        <begin position="515"/>
        <end position="517"/>
    </location>
</feature>
<feature type="strand" evidence="6">
    <location>
        <begin position="518"/>
        <end position="521"/>
    </location>
</feature>
<feature type="strand" evidence="6">
    <location>
        <begin position="524"/>
        <end position="527"/>
    </location>
</feature>
<feature type="strand" evidence="6">
    <location>
        <begin position="530"/>
        <end position="533"/>
    </location>
</feature>
<feature type="strand" evidence="6">
    <location>
        <begin position="538"/>
        <end position="542"/>
    </location>
</feature>
<feature type="strand" evidence="6">
    <location>
        <begin position="545"/>
        <end position="548"/>
    </location>
</feature>
<feature type="strand" evidence="6">
    <location>
        <begin position="553"/>
        <end position="555"/>
    </location>
</feature>
<feature type="turn" evidence="9">
    <location>
        <begin position="556"/>
        <end position="558"/>
    </location>
</feature>
<feature type="strand" evidence="6">
    <location>
        <begin position="559"/>
        <end position="564"/>
    </location>
</feature>
<feature type="strand" evidence="11">
    <location>
        <begin position="569"/>
        <end position="572"/>
    </location>
</feature>
<feature type="helix" evidence="10">
    <location>
        <begin position="573"/>
        <end position="576"/>
    </location>
</feature>
<feature type="helix" evidence="10">
    <location>
        <begin position="580"/>
        <end position="601"/>
    </location>
</feature>
<feature type="helix" evidence="10">
    <location>
        <begin position="611"/>
        <end position="613"/>
    </location>
</feature>
<feature type="helix" evidence="10">
    <location>
        <begin position="614"/>
        <end position="634"/>
    </location>
</feature>
<feature type="helix" evidence="10">
    <location>
        <begin position="641"/>
        <end position="663"/>
    </location>
</feature>
<feature type="helix" evidence="10">
    <location>
        <begin position="687"/>
        <end position="710"/>
    </location>
</feature>
<feature type="turn" evidence="12">
    <location>
        <begin position="711"/>
        <end position="713"/>
    </location>
</feature>
<feature type="strand" evidence="9">
    <location>
        <begin position="715"/>
        <end position="718"/>
    </location>
</feature>
<feature type="strand" evidence="12">
    <location>
        <begin position="722"/>
        <end position="724"/>
    </location>
</feature>
<feature type="strand" evidence="9">
    <location>
        <begin position="726"/>
        <end position="729"/>
    </location>
</feature>
<feature type="helix" evidence="10">
    <location>
        <begin position="733"/>
        <end position="759"/>
    </location>
</feature>
<feature type="helix" evidence="10">
    <location>
        <begin position="764"/>
        <end position="785"/>
    </location>
</feature>
<feature type="helix" evidence="10">
    <location>
        <begin position="786"/>
        <end position="788"/>
    </location>
</feature>
<feature type="strand" evidence="10">
    <location>
        <begin position="789"/>
        <end position="793"/>
    </location>
</feature>
<feature type="turn" evidence="10">
    <location>
        <begin position="795"/>
        <end position="797"/>
    </location>
</feature>
<feature type="helix" evidence="10">
    <location>
        <begin position="798"/>
        <end position="819"/>
    </location>
</feature>
<feature type="helix" evidence="9">
    <location>
        <begin position="820"/>
        <end position="825"/>
    </location>
</feature>
<feature type="turn" evidence="9">
    <location>
        <begin position="826"/>
        <end position="828"/>
    </location>
</feature>
<keyword id="KW-0002">3D-structure</keyword>
<keyword id="KW-1003">Cell membrane</keyword>
<keyword id="KW-1015">Disulfide bond</keyword>
<keyword id="KW-0297">G-protein coupled receptor</keyword>
<keyword id="KW-0325">Glycoprotein</keyword>
<keyword id="KW-0472">Membrane</keyword>
<keyword id="KW-0675">Receptor</keyword>
<keyword id="KW-1185">Reference proteome</keyword>
<keyword id="KW-0732">Signal</keyword>
<keyword id="KW-0807">Transducer</keyword>
<keyword id="KW-0812">Transmembrane</keyword>
<keyword id="KW-1133">Transmembrane helix</keyword>
<protein>
    <recommendedName>
        <fullName>Metabotropic glutamate receptor 3</fullName>
        <shortName>mGluR3</shortName>
    </recommendedName>
</protein>
<proteinExistence type="evidence at protein level"/>
<evidence type="ECO:0000255" key="1"/>
<evidence type="ECO:0000269" key="2">
    <source>
    </source>
</evidence>
<evidence type="ECO:0000269" key="3">
    <source>
    </source>
</evidence>
<evidence type="ECO:0000305" key="4"/>
<evidence type="ECO:0007744" key="5">
    <source>
    </source>
</evidence>
<evidence type="ECO:0007829" key="6">
    <source>
        <dbReference type="PDB" id="2E4U"/>
    </source>
</evidence>
<evidence type="ECO:0007829" key="7">
    <source>
        <dbReference type="PDB" id="2E4V"/>
    </source>
</evidence>
<evidence type="ECO:0007829" key="8">
    <source>
        <dbReference type="PDB" id="2E4X"/>
    </source>
</evidence>
<evidence type="ECO:0007829" key="9">
    <source>
        <dbReference type="PDB" id="8TQB"/>
    </source>
</evidence>
<evidence type="ECO:0007829" key="10">
    <source>
        <dbReference type="PDB" id="8TR0"/>
    </source>
</evidence>
<evidence type="ECO:0007829" key="11">
    <source>
        <dbReference type="PDB" id="8TR2"/>
    </source>
</evidence>
<evidence type="ECO:0007829" key="12">
    <source>
        <dbReference type="PDB" id="8TRC"/>
    </source>
</evidence>
<comment type="function">
    <text>G-protein coupled receptor for glutamate. Ligand binding causes a conformation change that triggers signaling via guanine nucleotide-binding proteins (G proteins) and modulates the activity of down-stream effectors. Signaling inhibits adenylate cyclase activity.</text>
</comment>
<comment type="subunit">
    <text evidence="2">Interacts with TAMALIN.</text>
</comment>
<comment type="subcellular location">
    <subcellularLocation>
        <location>Cell membrane</location>
        <topology>Multi-pass membrane protein</topology>
    </subcellularLocation>
</comment>
<comment type="tissue specificity">
    <text>Is widely distributed in the CNS. Predominant expression is seen in the neuronal cells of the cerebral cortex, dentate gyrus, and glial cells throughout brain regions.</text>
</comment>
<comment type="similarity">
    <text evidence="4">Belongs to the G-protein coupled receptor 3 family.</text>
</comment>
<name>GRM3_RAT</name>
<sequence length="879" mass="98960">MKMLTRLQILMLALFSKGFLLSLGDHNFMRREIKIEGDLVLGGLFPINEKGTGTEECGRINEDRGIQRLEAMLFAIDEINKDNYLLPGVKLGVHILDTCSRDTYALEQSLEFVRASLTKVDEAEYMCPDGSYAIQENIPLLIAGVIGGSYSSVSIQVANLLRLFQIPQISYASTSAKLSDKSRYDYFARTVPPDFYQAKAMAEILRFFNWTYVSTVASEGDYGETGIEAFEQEARLRNICIATAEKVGRSNIRKSYDSVIRELLQKPNARVVVLFMRSDDSRELIAAANRVNASFTWVASDGWGAQESIVKGSEHVAYGAITLELASHPVRQFDRYFQSLNPYNNHRNPWFRDFWEQKFQCSLQNKRNHRQVCDKHLAIDSSNYEQESKIMFVVNAVYAMAHALHKMQRTLCPNTTKLCDAMKILDGKKLYKEYLLKINFTAPFNPNKGADSIVKFDTFGDGMGRYNVFNLQQTGGKYSYLKVGHWAETLSLDVDSIHWSRNSVPTSQCSDPCAPNEMKNMQPGDVCCWICIPCEPYEYLVDEFTCMDCGPGQWPTADLSGCYNLPEDYIKWEDAWAIGPVTIACLGFLCTCIVITVFIKHNNTPLVKASGRELCYILLFGVSLSYCMTFFFIAKPSPVICALRRLGLGTSFAICYSALLTKTNCIARIFDGVKNGAQRPKFISPSSQVFICLGLILVQIVMVSVWLILETPGTRRYTLPEKRETVILKCNVKDSSMLISLTYDVVLVILCTVYAFKTRKCPENFNEAKFIGFTMYTTCIIWLAFLPIFYVTSSDYRVQTTTMCISVSLSGFVVLGCLFAPKVHIVLFQPQKNVVTHRLHLNRFSVSGTATTYSQSSASTYVPTVCNGREVLDSTTSSL</sequence>